<sequence length="507" mass="58671">MIEQVLHYWYYVLPAFIIFHWIVSAIHTNSLRRKLGAKPFTHTQLDGFYGFKFGRDFLKAKRIGRQVDLINSRFPDDIDTFSSYTFGNHVIFTRDPENIKALLATQFNDFSLGGRIKFFKPLLGYGIFTLDGEGWKHSRAMLRPQFAREQLPMSPSLEPHFNVKAYPQEQRWVFDIQELFFRFTVDSATEFLFGESVNSLKSASIGCDEETELEERKKFAEAFNKAQEYISTRVALQQLYWFVNNSEFKECNEIVHKFTNYYVQKALDATPEELEKQSGYVFLYELVKQTRDPNVLRDHHSISLLAGRDTTAGLLSFAVFELARNPHIWAKLREDVESQFGLGEESRIEEITFESLKRCEYLKAVMNETLRLHPSVPRNARFALKDTTLPRGGGPDGKDPILVRKMSCSIFISGTQIDPKHYGKDAKLFRPERWFESSTRNLGWAYLPFNGGPRICLGQQFALTEAGYILVRLAQSFDTLELKPDTEYLTKISHLTMCLFGAFVKMD</sequence>
<proteinExistence type="evidence at transcript level"/>
<comment type="function">
    <text>Together with an NADPH cytochrome P450 the enzyme system catalyzes the terminal hydroxylation as the first step in the assimilation of alkanes and fatty acids. Preferentially hydroxylates lauric acid.</text>
</comment>
<comment type="cofactor">
    <cofactor evidence="1">
        <name>heme</name>
        <dbReference type="ChEBI" id="CHEBI:30413"/>
    </cofactor>
</comment>
<comment type="subcellular location">
    <subcellularLocation>
        <location evidence="3">Membrane</location>
    </subcellularLocation>
    <subcellularLocation>
        <location>Membrane</location>
        <topology>Single-pass membrane protein</topology>
    </subcellularLocation>
</comment>
<comment type="induction">
    <text>By various alkanes.</text>
</comment>
<comment type="similarity">
    <text evidence="3">Belongs to the cytochrome P450 family.</text>
</comment>
<dbReference type="EC" id="1.14.14.-"/>
<dbReference type="EMBL" id="Z13011">
    <property type="protein sequence ID" value="CAA78355.1"/>
    <property type="molecule type" value="Genomic_DNA"/>
</dbReference>
<dbReference type="PIR" id="S22973">
    <property type="entry name" value="S22973"/>
</dbReference>
<dbReference type="SMR" id="P30609"/>
<dbReference type="VEuPathDB" id="FungiDB:CTMYA2_002860"/>
<dbReference type="VEuPathDB" id="FungiDB:CTRG_03120"/>
<dbReference type="GO" id="GO:0016020">
    <property type="term" value="C:membrane"/>
    <property type="evidence" value="ECO:0007669"/>
    <property type="project" value="UniProtKB-SubCell"/>
</dbReference>
<dbReference type="GO" id="GO:0020037">
    <property type="term" value="F:heme binding"/>
    <property type="evidence" value="ECO:0007669"/>
    <property type="project" value="InterPro"/>
</dbReference>
<dbReference type="GO" id="GO:0005506">
    <property type="term" value="F:iron ion binding"/>
    <property type="evidence" value="ECO:0007669"/>
    <property type="project" value="InterPro"/>
</dbReference>
<dbReference type="GO" id="GO:0016712">
    <property type="term" value="F:oxidoreductase activity, acting on paired donors, with incorporation or reduction of molecular oxygen, reduced flavin or flavoprotein as one donor, and incorporation of one atom of oxygen"/>
    <property type="evidence" value="ECO:0007669"/>
    <property type="project" value="InterPro"/>
</dbReference>
<dbReference type="CDD" id="cd11063">
    <property type="entry name" value="CYP52"/>
    <property type="match status" value="1"/>
</dbReference>
<dbReference type="Gene3D" id="1.10.630.10">
    <property type="entry name" value="Cytochrome P450"/>
    <property type="match status" value="1"/>
</dbReference>
<dbReference type="InterPro" id="IPR001128">
    <property type="entry name" value="Cyt_P450"/>
</dbReference>
<dbReference type="InterPro" id="IPR017972">
    <property type="entry name" value="Cyt_P450_CS"/>
</dbReference>
<dbReference type="InterPro" id="IPR002974">
    <property type="entry name" value="Cyt_P450_E_CYP52_ascomycetes"/>
</dbReference>
<dbReference type="InterPro" id="IPR047146">
    <property type="entry name" value="Cyt_P450_E_CYP52_fungi"/>
</dbReference>
<dbReference type="InterPro" id="IPR002402">
    <property type="entry name" value="Cyt_P450_E_grp-II"/>
</dbReference>
<dbReference type="InterPro" id="IPR036396">
    <property type="entry name" value="Cyt_P450_sf"/>
</dbReference>
<dbReference type="PANTHER" id="PTHR24287">
    <property type="entry name" value="P450, PUTATIVE (EUROFUNG)-RELATED"/>
    <property type="match status" value="1"/>
</dbReference>
<dbReference type="PANTHER" id="PTHR24287:SF1">
    <property type="entry name" value="P450, PUTATIVE (EUROFUNG)-RELATED"/>
    <property type="match status" value="1"/>
</dbReference>
<dbReference type="Pfam" id="PF00067">
    <property type="entry name" value="p450"/>
    <property type="match status" value="1"/>
</dbReference>
<dbReference type="PRINTS" id="PR00464">
    <property type="entry name" value="EP450II"/>
</dbReference>
<dbReference type="PRINTS" id="PR01239">
    <property type="entry name" value="EP450IICYP52"/>
</dbReference>
<dbReference type="PRINTS" id="PR00385">
    <property type="entry name" value="P450"/>
</dbReference>
<dbReference type="SUPFAM" id="SSF48264">
    <property type="entry name" value="Cytochrome P450"/>
    <property type="match status" value="1"/>
</dbReference>
<dbReference type="PROSITE" id="PS00086">
    <property type="entry name" value="CYTOCHROME_P450"/>
    <property type="match status" value="1"/>
</dbReference>
<evidence type="ECO:0000250" key="1"/>
<evidence type="ECO:0000255" key="2"/>
<evidence type="ECO:0000305" key="3"/>
<name>CP52G_CANTR</name>
<accession>P30609</accession>
<reference key="1">
    <citation type="journal article" date="1992" name="DNA Cell Biol.">
        <title>Identification and characterization of additional members of the cytochrome P450 multigene family CYP52 of Candida tropicalis.</title>
        <authorList>
            <person name="Seghezzi W."/>
            <person name="Meili C."/>
            <person name="Ruffiner R."/>
            <person name="Kuenzi R."/>
            <person name="Sanglard D."/>
            <person name="Fiechter A."/>
        </authorList>
    </citation>
    <scope>NUCLEOTIDE SEQUENCE [GENOMIC DNA]</scope>
    <source>
        <strain>ATCC 750 / CBS 94 / DSM 11953 / JCM 1541 / NBRC 1400</strain>
    </source>
</reference>
<feature type="chain" id="PRO_0000052025" description="Cytochrome P450 52A7">
    <location>
        <begin position="1"/>
        <end position="507"/>
    </location>
</feature>
<feature type="transmembrane region" description="Helical" evidence="2">
    <location>
        <begin position="6"/>
        <end position="26"/>
    </location>
</feature>
<feature type="binding site" description="axial binding residue" evidence="1">
    <location>
        <position position="456"/>
    </location>
    <ligand>
        <name>heme</name>
        <dbReference type="ChEBI" id="CHEBI:30413"/>
    </ligand>
    <ligandPart>
        <name>Fe</name>
        <dbReference type="ChEBI" id="CHEBI:18248"/>
    </ligandPart>
</feature>
<organism>
    <name type="scientific">Candida tropicalis</name>
    <name type="common">Yeast</name>
    <dbReference type="NCBI Taxonomy" id="5482"/>
    <lineage>
        <taxon>Eukaryota</taxon>
        <taxon>Fungi</taxon>
        <taxon>Dikarya</taxon>
        <taxon>Ascomycota</taxon>
        <taxon>Saccharomycotina</taxon>
        <taxon>Pichiomycetes</taxon>
        <taxon>Debaryomycetaceae</taxon>
        <taxon>Candida/Lodderomyces clade</taxon>
        <taxon>Candida</taxon>
    </lineage>
</organism>
<keyword id="KW-0349">Heme</keyword>
<keyword id="KW-0408">Iron</keyword>
<keyword id="KW-0472">Membrane</keyword>
<keyword id="KW-0479">Metal-binding</keyword>
<keyword id="KW-0503">Monooxygenase</keyword>
<keyword id="KW-0560">Oxidoreductase</keyword>
<keyword id="KW-0812">Transmembrane</keyword>
<keyword id="KW-1133">Transmembrane helix</keyword>
<gene>
    <name type="primary">CYP52A7</name>
</gene>
<protein>
    <recommendedName>
        <fullName>Cytochrome P450 52A7</fullName>
        <ecNumber>1.14.14.-</ecNumber>
    </recommendedName>
    <alternativeName>
        <fullName>Alkane-inducible P450-ALK4</fullName>
    </alternativeName>
    <alternativeName>
        <fullName>CYPLIIA7</fullName>
    </alternativeName>
</protein>